<organism>
    <name type="scientific">Mus musculus</name>
    <name type="common">Mouse</name>
    <dbReference type="NCBI Taxonomy" id="10090"/>
    <lineage>
        <taxon>Eukaryota</taxon>
        <taxon>Metazoa</taxon>
        <taxon>Chordata</taxon>
        <taxon>Craniata</taxon>
        <taxon>Vertebrata</taxon>
        <taxon>Euteleostomi</taxon>
        <taxon>Mammalia</taxon>
        <taxon>Eutheria</taxon>
        <taxon>Euarchontoglires</taxon>
        <taxon>Glires</taxon>
        <taxon>Rodentia</taxon>
        <taxon>Myomorpha</taxon>
        <taxon>Muroidea</taxon>
        <taxon>Muridae</taxon>
        <taxon>Murinae</taxon>
        <taxon>Mus</taxon>
        <taxon>Mus</taxon>
    </lineage>
</organism>
<evidence type="ECO:0000250" key="1"/>
<evidence type="ECO:0000250" key="2">
    <source>
        <dbReference type="UniProtKB" id="O14291"/>
    </source>
</evidence>
<evidence type="ECO:0000250" key="3">
    <source>
        <dbReference type="UniProtKB" id="Q96FF9"/>
    </source>
</evidence>
<evidence type="ECO:0000256" key="4">
    <source>
        <dbReference type="SAM" id="MobiDB-lite"/>
    </source>
</evidence>
<evidence type="ECO:0000269" key="5">
    <source>
    </source>
</evidence>
<evidence type="ECO:0000303" key="6">
    <source>
    </source>
</evidence>
<evidence type="ECO:0000305" key="7"/>
<accession>Q9CPY3</accession>
<accession>Q78HI6</accession>
<gene>
    <name type="primary">Cdca5</name>
</gene>
<reference key="1">
    <citation type="journal article" date="2005" name="Science">
        <title>The transcriptional landscape of the mammalian genome.</title>
        <authorList>
            <person name="Carninci P."/>
            <person name="Kasukawa T."/>
            <person name="Katayama S."/>
            <person name="Gough J."/>
            <person name="Frith M.C."/>
            <person name="Maeda N."/>
            <person name="Oyama R."/>
            <person name="Ravasi T."/>
            <person name="Lenhard B."/>
            <person name="Wells C."/>
            <person name="Kodzius R."/>
            <person name="Shimokawa K."/>
            <person name="Bajic V.B."/>
            <person name="Brenner S.E."/>
            <person name="Batalov S."/>
            <person name="Forrest A.R."/>
            <person name="Zavolan M."/>
            <person name="Davis M.J."/>
            <person name="Wilming L.G."/>
            <person name="Aidinis V."/>
            <person name="Allen J.E."/>
            <person name="Ambesi-Impiombato A."/>
            <person name="Apweiler R."/>
            <person name="Aturaliya R.N."/>
            <person name="Bailey T.L."/>
            <person name="Bansal M."/>
            <person name="Baxter L."/>
            <person name="Beisel K.W."/>
            <person name="Bersano T."/>
            <person name="Bono H."/>
            <person name="Chalk A.M."/>
            <person name="Chiu K.P."/>
            <person name="Choudhary V."/>
            <person name="Christoffels A."/>
            <person name="Clutterbuck D.R."/>
            <person name="Crowe M.L."/>
            <person name="Dalla E."/>
            <person name="Dalrymple B.P."/>
            <person name="de Bono B."/>
            <person name="Della Gatta G."/>
            <person name="di Bernardo D."/>
            <person name="Down T."/>
            <person name="Engstrom P."/>
            <person name="Fagiolini M."/>
            <person name="Faulkner G."/>
            <person name="Fletcher C.F."/>
            <person name="Fukushima T."/>
            <person name="Furuno M."/>
            <person name="Futaki S."/>
            <person name="Gariboldi M."/>
            <person name="Georgii-Hemming P."/>
            <person name="Gingeras T.R."/>
            <person name="Gojobori T."/>
            <person name="Green R.E."/>
            <person name="Gustincich S."/>
            <person name="Harbers M."/>
            <person name="Hayashi Y."/>
            <person name="Hensch T.K."/>
            <person name="Hirokawa N."/>
            <person name="Hill D."/>
            <person name="Huminiecki L."/>
            <person name="Iacono M."/>
            <person name="Ikeo K."/>
            <person name="Iwama A."/>
            <person name="Ishikawa T."/>
            <person name="Jakt M."/>
            <person name="Kanapin A."/>
            <person name="Katoh M."/>
            <person name="Kawasawa Y."/>
            <person name="Kelso J."/>
            <person name="Kitamura H."/>
            <person name="Kitano H."/>
            <person name="Kollias G."/>
            <person name="Krishnan S.P."/>
            <person name="Kruger A."/>
            <person name="Kummerfeld S.K."/>
            <person name="Kurochkin I.V."/>
            <person name="Lareau L.F."/>
            <person name="Lazarevic D."/>
            <person name="Lipovich L."/>
            <person name="Liu J."/>
            <person name="Liuni S."/>
            <person name="McWilliam S."/>
            <person name="Madan Babu M."/>
            <person name="Madera M."/>
            <person name="Marchionni L."/>
            <person name="Matsuda H."/>
            <person name="Matsuzawa S."/>
            <person name="Miki H."/>
            <person name="Mignone F."/>
            <person name="Miyake S."/>
            <person name="Morris K."/>
            <person name="Mottagui-Tabar S."/>
            <person name="Mulder N."/>
            <person name="Nakano N."/>
            <person name="Nakauchi H."/>
            <person name="Ng P."/>
            <person name="Nilsson R."/>
            <person name="Nishiguchi S."/>
            <person name="Nishikawa S."/>
            <person name="Nori F."/>
            <person name="Ohara O."/>
            <person name="Okazaki Y."/>
            <person name="Orlando V."/>
            <person name="Pang K.C."/>
            <person name="Pavan W.J."/>
            <person name="Pavesi G."/>
            <person name="Pesole G."/>
            <person name="Petrovsky N."/>
            <person name="Piazza S."/>
            <person name="Reed J."/>
            <person name="Reid J.F."/>
            <person name="Ring B.Z."/>
            <person name="Ringwald M."/>
            <person name="Rost B."/>
            <person name="Ruan Y."/>
            <person name="Salzberg S.L."/>
            <person name="Sandelin A."/>
            <person name="Schneider C."/>
            <person name="Schoenbach C."/>
            <person name="Sekiguchi K."/>
            <person name="Semple C.A."/>
            <person name="Seno S."/>
            <person name="Sessa L."/>
            <person name="Sheng Y."/>
            <person name="Shibata Y."/>
            <person name="Shimada H."/>
            <person name="Shimada K."/>
            <person name="Silva D."/>
            <person name="Sinclair B."/>
            <person name="Sperling S."/>
            <person name="Stupka E."/>
            <person name="Sugiura K."/>
            <person name="Sultana R."/>
            <person name="Takenaka Y."/>
            <person name="Taki K."/>
            <person name="Tammoja K."/>
            <person name="Tan S.L."/>
            <person name="Tang S."/>
            <person name="Taylor M.S."/>
            <person name="Tegner J."/>
            <person name="Teichmann S.A."/>
            <person name="Ueda H.R."/>
            <person name="van Nimwegen E."/>
            <person name="Verardo R."/>
            <person name="Wei C.L."/>
            <person name="Yagi K."/>
            <person name="Yamanishi H."/>
            <person name="Zabarovsky E."/>
            <person name="Zhu S."/>
            <person name="Zimmer A."/>
            <person name="Hide W."/>
            <person name="Bult C."/>
            <person name="Grimmond S.M."/>
            <person name="Teasdale R.D."/>
            <person name="Liu E.T."/>
            <person name="Brusic V."/>
            <person name="Quackenbush J."/>
            <person name="Wahlestedt C."/>
            <person name="Mattick J.S."/>
            <person name="Hume D.A."/>
            <person name="Kai C."/>
            <person name="Sasaki D."/>
            <person name="Tomaru Y."/>
            <person name="Fukuda S."/>
            <person name="Kanamori-Katayama M."/>
            <person name="Suzuki M."/>
            <person name="Aoki J."/>
            <person name="Arakawa T."/>
            <person name="Iida J."/>
            <person name="Imamura K."/>
            <person name="Itoh M."/>
            <person name="Kato T."/>
            <person name="Kawaji H."/>
            <person name="Kawagashira N."/>
            <person name="Kawashima T."/>
            <person name="Kojima M."/>
            <person name="Kondo S."/>
            <person name="Konno H."/>
            <person name="Nakano K."/>
            <person name="Ninomiya N."/>
            <person name="Nishio T."/>
            <person name="Okada M."/>
            <person name="Plessy C."/>
            <person name="Shibata K."/>
            <person name="Shiraki T."/>
            <person name="Suzuki S."/>
            <person name="Tagami M."/>
            <person name="Waki K."/>
            <person name="Watahiki A."/>
            <person name="Okamura-Oho Y."/>
            <person name="Suzuki H."/>
            <person name="Kawai J."/>
            <person name="Hayashizaki Y."/>
        </authorList>
    </citation>
    <scope>NUCLEOTIDE SEQUENCE [LARGE SCALE MRNA] (ISOFORM 1)</scope>
    <source>
        <strain>C57BL/6J</strain>
    </source>
</reference>
<reference key="2">
    <citation type="journal article" date="2004" name="Genome Res.">
        <title>The status, quality, and expansion of the NIH full-length cDNA project: the Mammalian Gene Collection (MGC).</title>
        <authorList>
            <consortium name="The MGC Project Team"/>
        </authorList>
    </citation>
    <scope>NUCLEOTIDE SEQUENCE [LARGE SCALE MRNA] (ISOFORMS 1 AND 2)</scope>
    <source>
        <strain>C57BL/6NCr</strain>
        <tissue>Hematopoietic stem cell</tissue>
    </source>
</reference>
<reference key="3">
    <citation type="journal article" date="2010" name="Cell">
        <title>A tissue-specific atlas of mouse protein phosphorylation and expression.</title>
        <authorList>
            <person name="Huttlin E.L."/>
            <person name="Jedrychowski M.P."/>
            <person name="Elias J.E."/>
            <person name="Goswami T."/>
            <person name="Rad R."/>
            <person name="Beausoleil S.A."/>
            <person name="Villen J."/>
            <person name="Haas W."/>
            <person name="Sowa M.E."/>
            <person name="Gygi S.P."/>
        </authorList>
    </citation>
    <scope>IDENTIFICATION BY MASS SPECTROMETRY [LARGE SCALE ANALYSIS]</scope>
    <source>
        <tissue>Spleen</tissue>
    </source>
</reference>
<reference key="4">
    <citation type="journal article" date="2010" name="Cell">
        <title>Sororin mediates sister chromatid cohesion by antagonizing wapl.</title>
        <authorList>
            <person name="Nishiyama T."/>
            <person name="Ladurner R."/>
            <person name="Schmitz J."/>
            <person name="Kreidl E."/>
            <person name="Schleiffer A."/>
            <person name="Bhaskara V."/>
            <person name="Bando M."/>
            <person name="Shirahige K."/>
            <person name="Hyman A.A."/>
            <person name="Mechtler K."/>
            <person name="Peters J.M."/>
        </authorList>
    </citation>
    <scope>FUNCTION</scope>
    <scope>INTERACTION WITH PDS5A AND PDS5B</scope>
    <scope>SUBCELLULAR LOCATION</scope>
</reference>
<sequence length="264" mass="28991">MAERRTRSGGAAQRSGPRTSLTKPSKSSKRKSGSDLPNSFSEIWPRTTPAVPVRKAIVLKKIVAHAVEVPDVHTVRRSPRISFILEKENNPPLKVPTKEDLFKTCSVPGTPSSTPVLYTQNVEPDSGEAELDSRDLEMSQKVRRSYSRLQSLGCASTSTPGRRSFFGFEGPDDLPGVSPVVCSKLIETPKVPAKDLVPARTKDLVPDSTKDLVPARTLPGISPPVVKEKRKKKVPEILKSELDKWAVAMNAEFEAAEQFELLIE</sequence>
<dbReference type="EMBL" id="AK010540">
    <property type="protein sequence ID" value="BAB27016.1"/>
    <property type="molecule type" value="mRNA"/>
</dbReference>
<dbReference type="EMBL" id="AK011701">
    <property type="protein sequence ID" value="BAB27788.1"/>
    <property type="molecule type" value="mRNA"/>
</dbReference>
<dbReference type="EMBL" id="BC029626">
    <property type="protein sequence ID" value="AAH29626.1"/>
    <property type="molecule type" value="mRNA"/>
</dbReference>
<dbReference type="EMBL" id="BC052904">
    <property type="protein sequence ID" value="AAH52904.1"/>
    <property type="molecule type" value="mRNA"/>
</dbReference>
<dbReference type="CCDS" id="CCDS29493.1">
    <molecule id="Q9CPY3-1"/>
</dbReference>
<dbReference type="RefSeq" id="NP_080686.1">
    <molecule id="Q9CPY3-1"/>
    <property type="nucleotide sequence ID" value="NM_026410.3"/>
</dbReference>
<dbReference type="SMR" id="Q9CPY3"/>
<dbReference type="BioGRID" id="212479">
    <property type="interactions" value="21"/>
</dbReference>
<dbReference type="FunCoup" id="Q9CPY3">
    <property type="interactions" value="1692"/>
</dbReference>
<dbReference type="IntAct" id="Q9CPY3">
    <property type="interactions" value="20"/>
</dbReference>
<dbReference type="STRING" id="10090.ENSMUSP00000025704"/>
<dbReference type="GlyGen" id="Q9CPY3">
    <property type="glycosylation" value="2 sites"/>
</dbReference>
<dbReference type="iPTMnet" id="Q9CPY3"/>
<dbReference type="PhosphoSitePlus" id="Q9CPY3"/>
<dbReference type="jPOST" id="Q9CPY3"/>
<dbReference type="PaxDb" id="10090-ENSMUSP00000025704"/>
<dbReference type="PeptideAtlas" id="Q9CPY3"/>
<dbReference type="ProteomicsDB" id="281277">
    <molecule id="Q9CPY3-1"/>
</dbReference>
<dbReference type="ProteomicsDB" id="281278">
    <molecule id="Q9CPY3-2"/>
</dbReference>
<dbReference type="Pumba" id="Q9CPY3"/>
<dbReference type="Antibodypedia" id="15765">
    <property type="antibodies" value="113 antibodies from 21 providers"/>
</dbReference>
<dbReference type="Ensembl" id="ENSMUST00000025704.3">
    <molecule id="Q9CPY3-1"/>
    <property type="protein sequence ID" value="ENSMUSP00000025704.3"/>
    <property type="gene ID" value="ENSMUSG00000024791.11"/>
</dbReference>
<dbReference type="GeneID" id="67849"/>
<dbReference type="KEGG" id="mmu:67849"/>
<dbReference type="UCSC" id="uc008ghh.1">
    <molecule id="Q9CPY3-1"/>
    <property type="organism name" value="mouse"/>
</dbReference>
<dbReference type="UCSC" id="uc008ghi.1">
    <molecule id="Q9CPY3-2"/>
    <property type="organism name" value="mouse"/>
</dbReference>
<dbReference type="AGR" id="MGI:1915099"/>
<dbReference type="CTD" id="113130"/>
<dbReference type="MGI" id="MGI:1915099">
    <property type="gene designation" value="Cdca5"/>
</dbReference>
<dbReference type="VEuPathDB" id="HostDB:ENSMUSG00000024791"/>
<dbReference type="eggNOG" id="ENOG502S4XG">
    <property type="taxonomic scope" value="Eukaryota"/>
</dbReference>
<dbReference type="GeneTree" id="ENSGT00390000010028"/>
<dbReference type="HOGENOM" id="CLU_088614_0_0_1"/>
<dbReference type="InParanoid" id="Q9CPY3"/>
<dbReference type="OMA" id="KKVQQID"/>
<dbReference type="OrthoDB" id="9949198at2759"/>
<dbReference type="PhylomeDB" id="Q9CPY3"/>
<dbReference type="TreeFam" id="TF101070"/>
<dbReference type="Reactome" id="R-MMU-2467813">
    <property type="pathway name" value="Separation of Sister Chromatids"/>
</dbReference>
<dbReference type="Reactome" id="R-MMU-2468052">
    <property type="pathway name" value="Establishment of Sister Chromatid Cohesion"/>
</dbReference>
<dbReference type="Reactome" id="R-MMU-2500257">
    <property type="pathway name" value="Resolution of Sister Chromatid Cohesion"/>
</dbReference>
<dbReference type="BioGRID-ORCS" id="67849">
    <property type="hits" value="30 hits in 114 CRISPR screens"/>
</dbReference>
<dbReference type="PRO" id="PR:Q9CPY3"/>
<dbReference type="Proteomes" id="UP000000589">
    <property type="component" value="Chromosome 19"/>
</dbReference>
<dbReference type="RNAct" id="Q9CPY3">
    <property type="molecule type" value="protein"/>
</dbReference>
<dbReference type="Bgee" id="ENSMUSG00000024791">
    <property type="expression patterns" value="Expressed in primary oocyte and 193 other cell types or tissues"/>
</dbReference>
<dbReference type="GO" id="GO:0000785">
    <property type="term" value="C:chromatin"/>
    <property type="evidence" value="ECO:0000314"/>
    <property type="project" value="UniProtKB"/>
</dbReference>
<dbReference type="GO" id="GO:0005737">
    <property type="term" value="C:cytoplasm"/>
    <property type="evidence" value="ECO:0000314"/>
    <property type="project" value="UniProtKB"/>
</dbReference>
<dbReference type="GO" id="GO:0005654">
    <property type="term" value="C:nucleoplasm"/>
    <property type="evidence" value="ECO:0007669"/>
    <property type="project" value="Ensembl"/>
</dbReference>
<dbReference type="GO" id="GO:0005634">
    <property type="term" value="C:nucleus"/>
    <property type="evidence" value="ECO:0000314"/>
    <property type="project" value="UniProtKB"/>
</dbReference>
<dbReference type="GO" id="GO:0044877">
    <property type="term" value="F:protein-containing complex binding"/>
    <property type="evidence" value="ECO:0007669"/>
    <property type="project" value="Ensembl"/>
</dbReference>
<dbReference type="GO" id="GO:0051301">
    <property type="term" value="P:cell division"/>
    <property type="evidence" value="ECO:0007669"/>
    <property type="project" value="UniProtKB-KW"/>
</dbReference>
<dbReference type="GO" id="GO:0006302">
    <property type="term" value="P:double-strand break repair"/>
    <property type="evidence" value="ECO:0000250"/>
    <property type="project" value="UniProtKB"/>
</dbReference>
<dbReference type="GO" id="GO:0007064">
    <property type="term" value="P:mitotic sister chromatid cohesion"/>
    <property type="evidence" value="ECO:0000316"/>
    <property type="project" value="UniProtKB"/>
</dbReference>
<dbReference type="InterPro" id="IPR018605">
    <property type="entry name" value="Sororin"/>
</dbReference>
<dbReference type="PANTHER" id="PTHR31092">
    <property type="entry name" value="SORORIN"/>
    <property type="match status" value="1"/>
</dbReference>
<dbReference type="PANTHER" id="PTHR31092:SF2">
    <property type="entry name" value="SORORIN"/>
    <property type="match status" value="1"/>
</dbReference>
<dbReference type="Pfam" id="PF25220">
    <property type="entry name" value="Sororin_C"/>
    <property type="match status" value="1"/>
</dbReference>
<dbReference type="Pfam" id="PF09666">
    <property type="entry name" value="Sororin_middle"/>
    <property type="match status" value="1"/>
</dbReference>
<keyword id="KW-0025">Alternative splicing</keyword>
<keyword id="KW-0131">Cell cycle</keyword>
<keyword id="KW-0132">Cell division</keyword>
<keyword id="KW-0158">Chromosome</keyword>
<keyword id="KW-0963">Cytoplasm</keyword>
<keyword id="KW-0498">Mitosis</keyword>
<keyword id="KW-0539">Nucleus</keyword>
<keyword id="KW-0597">Phosphoprotein</keyword>
<keyword id="KW-1185">Reference proteome</keyword>
<keyword id="KW-0832">Ubl conjugation</keyword>
<name>CDCA5_MOUSE</name>
<feature type="chain" id="PRO_0000089450" description="Sororin">
    <location>
        <begin position="1"/>
        <end position="264"/>
    </location>
</feature>
<feature type="region of interest" description="Disordered" evidence="4">
    <location>
        <begin position="1"/>
        <end position="45"/>
    </location>
</feature>
<feature type="region of interest" description="C-terminal Sororin domain" evidence="2">
    <location>
        <begin position="242"/>
        <end position="264"/>
    </location>
</feature>
<feature type="short sequence motif" description="KEN box">
    <location>
        <begin position="87"/>
        <end position="89"/>
    </location>
</feature>
<feature type="short sequence motif" description="FGF motif">
    <location>
        <begin position="166"/>
        <end position="168"/>
    </location>
</feature>
<feature type="modified residue" description="Phosphoserine" evidence="3">
    <location>
        <position position="20"/>
    </location>
</feature>
<feature type="modified residue" description="Phosphoserine" evidence="3">
    <location>
        <position position="32"/>
    </location>
</feature>
<feature type="modified residue" description="Phosphoserine" evidence="3">
    <location>
        <position position="34"/>
    </location>
</feature>
<feature type="modified residue" description="Phosphoserine" evidence="3">
    <location>
        <position position="78"/>
    </location>
</feature>
<feature type="modified residue" description="Phosphoserine" evidence="3">
    <location>
        <position position="82"/>
    </location>
</feature>
<feature type="modified residue" description="Phosphothreonine" evidence="3">
    <location>
        <position position="97"/>
    </location>
</feature>
<feature type="modified residue" description="Phosphoserine" evidence="3">
    <location>
        <position position="106"/>
    </location>
</feature>
<feature type="modified residue" description="Phosphothreonine" evidence="3">
    <location>
        <position position="110"/>
    </location>
</feature>
<feature type="modified residue" description="Phosphothreonine" evidence="3">
    <location>
        <position position="114"/>
    </location>
</feature>
<feature type="modified residue" description="Phosphothreonine" evidence="3">
    <location>
        <position position="159"/>
    </location>
</feature>
<feature type="modified residue" description="Phosphoserine" evidence="3">
    <location>
        <position position="222"/>
    </location>
</feature>
<feature type="splice variant" id="VSP_014402" description="In isoform 2." evidence="6">
    <location>
        <begin position="1"/>
        <end position="137"/>
    </location>
</feature>
<protein>
    <recommendedName>
        <fullName>Sororin</fullName>
    </recommendedName>
    <alternativeName>
        <fullName>Cell division cycle-associated protein 5</fullName>
    </alternativeName>
</protein>
<comment type="function">
    <text evidence="5">Regulator of sister chromatid cohesion in mitosis stabilizing cohesin complex association with chromatin. May antagonize the action of WAPL which stimulates cohesin dissociation from chromatin. Cohesion ensures that chromosome partitioning is accurate in both meiotic and mitotic cells and plays an important role in DNA repair. Required for efficient DNA double-stranded break repair.</text>
</comment>
<comment type="subunit">
    <text evidence="1 5">Interacts with the APC/C complex (By similarity). Interacts with the chromatin-bound cohesin complex; the interaction is indirect, occurs after DNA replication and requires acetylation of the cohesin component SMC3. Interacts (via the FGF motif) with PDS5A and PDS5B; the interaction is direct and prevents the interaction of PDS5A with WAPL.</text>
</comment>
<comment type="subcellular location">
    <subcellularLocation>
        <location evidence="5">Nucleus</location>
    </subcellularLocation>
    <subcellularLocation>
        <location evidence="5">Chromosome</location>
    </subcellularLocation>
    <subcellularLocation>
        <location evidence="5">Cytoplasm</location>
    </subcellularLocation>
    <text>Associates with nuclear chromatin from S phase until metaphase and is released in the cytoplasm upon nuclear envelope breakdown.</text>
</comment>
<comment type="alternative products">
    <event type="alternative splicing"/>
    <isoform>
        <id>Q9CPY3-1</id>
        <name>1</name>
        <sequence type="displayed"/>
    </isoform>
    <isoform>
        <id>Q9CPY3-2</id>
        <name>2</name>
        <sequence type="described" ref="VSP_014402"/>
    </isoform>
</comment>
<comment type="domain">
    <text evidence="1">The KEN box is required for the association with the APC/C complex.</text>
</comment>
<comment type="PTM">
    <text evidence="1">Phosphorylated. Phosphorylation, as cells enter mitosis, disrupts the interaction with PDS5A and relieves the inhibition of WAPL by CDCA5 (By similarity).</text>
</comment>
<comment type="PTM">
    <text evidence="1">Ubiquitinated by the APC/C complex in G1, leading to its degradation.</text>
</comment>
<comment type="similarity">
    <text evidence="7">Belongs to the sororin family.</text>
</comment>
<proteinExistence type="evidence at protein level"/>